<dbReference type="EC" id="4.2.1.1"/>
<dbReference type="EMBL" id="U08398">
    <property type="protein sequence ID" value="AAA86939.2"/>
    <property type="molecule type" value="mRNA"/>
</dbReference>
<dbReference type="PIR" id="S48675">
    <property type="entry name" value="S48675"/>
</dbReference>
<dbReference type="SMR" id="P46510"/>
<dbReference type="BindingDB" id="P46510"/>
<dbReference type="ChEMBL" id="CHEMBL2401609"/>
<dbReference type="DrugCentral" id="P46510"/>
<dbReference type="BRENDA" id="4.2.1.1">
    <property type="organism ID" value="2264"/>
</dbReference>
<dbReference type="GO" id="GO:0005737">
    <property type="term" value="C:cytoplasm"/>
    <property type="evidence" value="ECO:0007669"/>
    <property type="project" value="UniProtKB-SubCell"/>
</dbReference>
<dbReference type="GO" id="GO:0004089">
    <property type="term" value="F:carbonate dehydratase activity"/>
    <property type="evidence" value="ECO:0007669"/>
    <property type="project" value="UniProtKB-EC"/>
</dbReference>
<dbReference type="GO" id="GO:0008270">
    <property type="term" value="F:zinc ion binding"/>
    <property type="evidence" value="ECO:0007669"/>
    <property type="project" value="InterPro"/>
</dbReference>
<dbReference type="GO" id="GO:0015976">
    <property type="term" value="P:carbon utilization"/>
    <property type="evidence" value="ECO:0007669"/>
    <property type="project" value="InterPro"/>
</dbReference>
<dbReference type="CDD" id="cd00884">
    <property type="entry name" value="beta_CA_cladeB"/>
    <property type="match status" value="1"/>
</dbReference>
<dbReference type="FunFam" id="3.40.1050.10:FF:000002">
    <property type="entry name" value="Carbonic anhydrase"/>
    <property type="match status" value="1"/>
</dbReference>
<dbReference type="Gene3D" id="3.40.1050.10">
    <property type="entry name" value="Carbonic anhydrase"/>
    <property type="match status" value="1"/>
</dbReference>
<dbReference type="InterPro" id="IPR045066">
    <property type="entry name" value="Beta_CA_cladeB"/>
</dbReference>
<dbReference type="InterPro" id="IPR001765">
    <property type="entry name" value="Carbonic_anhydrase"/>
</dbReference>
<dbReference type="InterPro" id="IPR015892">
    <property type="entry name" value="Carbonic_anhydrase_CS"/>
</dbReference>
<dbReference type="InterPro" id="IPR036874">
    <property type="entry name" value="Carbonic_anhydrase_sf"/>
</dbReference>
<dbReference type="PANTHER" id="PTHR11002:SF56">
    <property type="entry name" value="BETA CARBONIC ANHYDRASE 2, CHLOROPLASTIC"/>
    <property type="match status" value="1"/>
</dbReference>
<dbReference type="PANTHER" id="PTHR11002">
    <property type="entry name" value="CARBONIC ANHYDRASE"/>
    <property type="match status" value="1"/>
</dbReference>
<dbReference type="Pfam" id="PF00484">
    <property type="entry name" value="Pro_CA"/>
    <property type="match status" value="1"/>
</dbReference>
<dbReference type="SMART" id="SM00947">
    <property type="entry name" value="Pro_CA"/>
    <property type="match status" value="1"/>
</dbReference>
<dbReference type="SUPFAM" id="SSF53056">
    <property type="entry name" value="beta-carbonic anhydrase, cab"/>
    <property type="match status" value="1"/>
</dbReference>
<dbReference type="PROSITE" id="PS00704">
    <property type="entry name" value="PROK_CO2_ANHYDRASE_1"/>
    <property type="match status" value="1"/>
</dbReference>
<dbReference type="PROSITE" id="PS00705">
    <property type="entry name" value="PROK_CO2_ANHYDRASE_2"/>
    <property type="match status" value="1"/>
</dbReference>
<evidence type="ECO:0000305" key="1"/>
<keyword id="KW-0963">Cytoplasm</keyword>
<keyword id="KW-0456">Lyase</keyword>
<keyword id="KW-0862">Zinc</keyword>
<organism>
    <name type="scientific">Flaveria bidentis</name>
    <name type="common">Coastal plain yellowtops</name>
    <name type="synonym">Ethulia bidentis</name>
    <dbReference type="NCBI Taxonomy" id="4224"/>
    <lineage>
        <taxon>Eukaryota</taxon>
        <taxon>Viridiplantae</taxon>
        <taxon>Streptophyta</taxon>
        <taxon>Embryophyta</taxon>
        <taxon>Tracheophyta</taxon>
        <taxon>Spermatophyta</taxon>
        <taxon>Magnoliopsida</taxon>
        <taxon>eudicotyledons</taxon>
        <taxon>Gunneridae</taxon>
        <taxon>Pentapetalae</taxon>
        <taxon>asterids</taxon>
        <taxon>campanulids</taxon>
        <taxon>Asterales</taxon>
        <taxon>Asteraceae</taxon>
        <taxon>Asteroideae</taxon>
        <taxon>Heliantheae alliance</taxon>
        <taxon>Tageteae</taxon>
        <taxon>Flaveria</taxon>
    </lineage>
</organism>
<reference key="1">
    <citation type="journal article" date="1994" name="FEBS Lett.">
        <title>The nucleotide sequence of a complementary DNA encoding Flaveria bidentis carbonic anhydrase.</title>
        <authorList>
            <person name="Cavallaro A."/>
            <person name="Ludwig M."/>
            <person name="Burnell J.N."/>
        </authorList>
    </citation>
    <scope>NUCLEOTIDE SEQUENCE [MRNA]</scope>
    <source>
        <tissue>Leaf</tissue>
    </source>
</reference>
<reference key="2">
    <citation type="submission" date="2004-01" db="EMBL/GenBank/DDBJ databases">
        <authorList>
            <person name="Burnell J.N."/>
        </authorList>
    </citation>
    <scope>SEQUENCE REVISION</scope>
</reference>
<name>CAHX_FLABI</name>
<comment type="function">
    <text>Reversible hydration of carbon dioxide.</text>
</comment>
<comment type="catalytic activity">
    <reaction>
        <text>hydrogencarbonate + H(+) = CO2 + H2O</text>
        <dbReference type="Rhea" id="RHEA:10748"/>
        <dbReference type="ChEBI" id="CHEBI:15377"/>
        <dbReference type="ChEBI" id="CHEBI:15378"/>
        <dbReference type="ChEBI" id="CHEBI:16526"/>
        <dbReference type="ChEBI" id="CHEBI:17544"/>
        <dbReference type="EC" id="4.2.1.1"/>
    </reaction>
</comment>
<comment type="subcellular location">
    <subcellularLocation>
        <location evidence="1">Cytoplasm</location>
    </subcellularLocation>
</comment>
<comment type="domain">
    <text>Possesses a transit-like peptide, but it is proposed that this peptide is not removed and that therefore the enzyme stays in the cytoplasm instead of going to the chloroplast.</text>
</comment>
<comment type="similarity">
    <text evidence="1">Belongs to the beta-class carbonic anhydrase family.</text>
</comment>
<accession>P46510</accession>
<proteinExistence type="evidence at transcript level"/>
<feature type="chain" id="PRO_0000077453" description="Carbonic anhydrase">
    <location>
        <begin position="1"/>
        <end position="330"/>
    </location>
</feature>
<feature type="region of interest" description="Chloroplast transit peptide-like">
    <location>
        <begin position="1"/>
        <end position="109"/>
    </location>
</feature>
<sequence length="330" mass="35545">MSAASAFAMNAPSFVNASSLKKASTSARSGVLSARFTCNSSSSSSSSATPPSLIRNEPVFAAPAPIITPNWTEDGNESYEEAIDALKKTLIEKGELEPVAATRIDQITAQAAAPDTKAPFDPVERIKSGFVKFKTEKFVTNPALYDELAKGQSPKFMVFACSDSRVCPSHVLDFQPGEAFVVRNVANMVPPFDKTKYSGVGAAVEYAVLHLKVQEIFVIGHSRCGGIKGLMTFPDEGPHSTDFIEDWVKVCLPAKSKVVAEHNGTHLDDQCVLCEKEAVNVSLGNLLTYPFVRDGLRNKTLALKGGHYDFVNGTFELWALDFGLSSPTSV</sequence>
<protein>
    <recommendedName>
        <fullName>Carbonic anhydrase</fullName>
        <ecNumber>4.2.1.1</ecNumber>
    </recommendedName>
    <alternativeName>
        <fullName>Carbonate dehydratase</fullName>
    </alternativeName>
</protein>